<dbReference type="EC" id="4.3.3.7" evidence="1"/>
<dbReference type="EMBL" id="AM889285">
    <property type="protein sequence ID" value="CAP55822.1"/>
    <property type="molecule type" value="Genomic_DNA"/>
</dbReference>
<dbReference type="EMBL" id="CP001189">
    <property type="protein sequence ID" value="ACI49903.1"/>
    <property type="status" value="ALT_INIT"/>
    <property type="molecule type" value="Genomic_DNA"/>
</dbReference>
<dbReference type="RefSeq" id="WP_012552956.1">
    <property type="nucleotide sequence ID" value="NC_011365.1"/>
</dbReference>
<dbReference type="SMR" id="A9HIW2"/>
<dbReference type="STRING" id="272568.GDI1879"/>
<dbReference type="KEGG" id="gdi:GDI1879"/>
<dbReference type="KEGG" id="gdj:Gdia_0103"/>
<dbReference type="eggNOG" id="COG0329">
    <property type="taxonomic scope" value="Bacteria"/>
</dbReference>
<dbReference type="HOGENOM" id="CLU_049343_7_0_5"/>
<dbReference type="UniPathway" id="UPA00034">
    <property type="reaction ID" value="UER00017"/>
</dbReference>
<dbReference type="Proteomes" id="UP000001176">
    <property type="component" value="Chromosome"/>
</dbReference>
<dbReference type="GO" id="GO:0005829">
    <property type="term" value="C:cytosol"/>
    <property type="evidence" value="ECO:0007669"/>
    <property type="project" value="TreeGrafter"/>
</dbReference>
<dbReference type="GO" id="GO:0008840">
    <property type="term" value="F:4-hydroxy-tetrahydrodipicolinate synthase activity"/>
    <property type="evidence" value="ECO:0007669"/>
    <property type="project" value="UniProtKB-UniRule"/>
</dbReference>
<dbReference type="GO" id="GO:0019877">
    <property type="term" value="P:diaminopimelate biosynthetic process"/>
    <property type="evidence" value="ECO:0007669"/>
    <property type="project" value="UniProtKB-UniRule"/>
</dbReference>
<dbReference type="GO" id="GO:0009089">
    <property type="term" value="P:lysine biosynthetic process via diaminopimelate"/>
    <property type="evidence" value="ECO:0007669"/>
    <property type="project" value="UniProtKB-UniRule"/>
</dbReference>
<dbReference type="CDD" id="cd00950">
    <property type="entry name" value="DHDPS"/>
    <property type="match status" value="1"/>
</dbReference>
<dbReference type="Gene3D" id="3.20.20.70">
    <property type="entry name" value="Aldolase class I"/>
    <property type="match status" value="1"/>
</dbReference>
<dbReference type="HAMAP" id="MF_00418">
    <property type="entry name" value="DapA"/>
    <property type="match status" value="1"/>
</dbReference>
<dbReference type="InterPro" id="IPR013785">
    <property type="entry name" value="Aldolase_TIM"/>
</dbReference>
<dbReference type="InterPro" id="IPR005263">
    <property type="entry name" value="DapA"/>
</dbReference>
<dbReference type="InterPro" id="IPR002220">
    <property type="entry name" value="DapA-like"/>
</dbReference>
<dbReference type="InterPro" id="IPR020625">
    <property type="entry name" value="Schiff_base-form_aldolases_AS"/>
</dbReference>
<dbReference type="InterPro" id="IPR020624">
    <property type="entry name" value="Schiff_base-form_aldolases_CS"/>
</dbReference>
<dbReference type="NCBIfam" id="TIGR00674">
    <property type="entry name" value="dapA"/>
    <property type="match status" value="1"/>
</dbReference>
<dbReference type="PANTHER" id="PTHR12128:SF66">
    <property type="entry name" value="4-HYDROXY-2-OXOGLUTARATE ALDOLASE, MITOCHONDRIAL"/>
    <property type="match status" value="1"/>
</dbReference>
<dbReference type="PANTHER" id="PTHR12128">
    <property type="entry name" value="DIHYDRODIPICOLINATE SYNTHASE"/>
    <property type="match status" value="1"/>
</dbReference>
<dbReference type="Pfam" id="PF00701">
    <property type="entry name" value="DHDPS"/>
    <property type="match status" value="1"/>
</dbReference>
<dbReference type="PIRSF" id="PIRSF001365">
    <property type="entry name" value="DHDPS"/>
    <property type="match status" value="1"/>
</dbReference>
<dbReference type="PRINTS" id="PR00146">
    <property type="entry name" value="DHPICSNTHASE"/>
</dbReference>
<dbReference type="SMART" id="SM01130">
    <property type="entry name" value="DHDPS"/>
    <property type="match status" value="1"/>
</dbReference>
<dbReference type="SUPFAM" id="SSF51569">
    <property type="entry name" value="Aldolase"/>
    <property type="match status" value="1"/>
</dbReference>
<dbReference type="PROSITE" id="PS00665">
    <property type="entry name" value="DHDPS_1"/>
    <property type="match status" value="1"/>
</dbReference>
<dbReference type="PROSITE" id="PS00666">
    <property type="entry name" value="DHDPS_2"/>
    <property type="match status" value="1"/>
</dbReference>
<accession>A9HIW2</accession>
<accession>B5ZJW4</accession>
<name>DAPA_GLUDA</name>
<protein>
    <recommendedName>
        <fullName evidence="1">4-hydroxy-tetrahydrodipicolinate synthase</fullName>
        <shortName evidence="1">HTPA synthase</shortName>
        <ecNumber evidence="1">4.3.3.7</ecNumber>
    </recommendedName>
</protein>
<sequence length="297" mass="31539">METTMFKGSITALITPMNDDGSLDFSGFGRFVDWQVTEGSSGVVPVGTTGESPTLTHEEHARIVEYTVQVVAGRIPVIAGAGSNSTAEAVGMARHAKSVGADGVLVVAPYYNKPTQEGLYRHFMTVADATDLPLIIYNIPGRSVVDISVETMARMAQHARIVGVKDATANLLRPLQVRRAIRHKPFTQLSGEDGTVVSFLAAGGEGCISVTSNIAPRLCAELHRAWQDGRVADAMAIQDRLSAVHDALFCESNPGPVKYAASLLGLAGETCRLPLAPLAEDSRMRVREALTGAGLLN</sequence>
<feature type="chain" id="PRO_1000080532" description="4-hydroxy-tetrahydrodipicolinate synthase">
    <location>
        <begin position="1"/>
        <end position="297"/>
    </location>
</feature>
<feature type="active site" description="Proton donor/acceptor" evidence="1">
    <location>
        <position position="137"/>
    </location>
</feature>
<feature type="active site" description="Schiff-base intermediate with substrate" evidence="1">
    <location>
        <position position="165"/>
    </location>
</feature>
<feature type="binding site" evidence="1">
    <location>
        <position position="49"/>
    </location>
    <ligand>
        <name>pyruvate</name>
        <dbReference type="ChEBI" id="CHEBI:15361"/>
    </ligand>
</feature>
<feature type="binding site" evidence="1">
    <location>
        <position position="208"/>
    </location>
    <ligand>
        <name>pyruvate</name>
        <dbReference type="ChEBI" id="CHEBI:15361"/>
    </ligand>
</feature>
<feature type="site" description="Part of a proton relay during catalysis" evidence="1">
    <location>
        <position position="48"/>
    </location>
</feature>
<feature type="site" description="Part of a proton relay during catalysis" evidence="1">
    <location>
        <position position="111"/>
    </location>
</feature>
<evidence type="ECO:0000255" key="1">
    <source>
        <dbReference type="HAMAP-Rule" id="MF_00418"/>
    </source>
</evidence>
<evidence type="ECO:0000305" key="2"/>
<keyword id="KW-0028">Amino-acid biosynthesis</keyword>
<keyword id="KW-0963">Cytoplasm</keyword>
<keyword id="KW-0220">Diaminopimelate biosynthesis</keyword>
<keyword id="KW-0456">Lyase</keyword>
<keyword id="KW-0457">Lysine biosynthesis</keyword>
<keyword id="KW-1185">Reference proteome</keyword>
<keyword id="KW-0704">Schiff base</keyword>
<proteinExistence type="inferred from homology"/>
<reference key="1">
    <citation type="journal article" date="2009" name="BMC Genomics">
        <title>Complete genome sequence of the sugarcane nitrogen-fixing endophyte Gluconacetobacter diazotrophicus Pal5.</title>
        <authorList>
            <person name="Bertalan M."/>
            <person name="Albano R."/>
            <person name="de Padua V."/>
            <person name="Rouws L."/>
            <person name="Rojas C."/>
            <person name="Hemerly A."/>
            <person name="Teixeira K."/>
            <person name="Schwab S."/>
            <person name="Araujo J."/>
            <person name="Oliveira A."/>
            <person name="Franca L."/>
            <person name="Magalhaes V."/>
            <person name="Alqueres S."/>
            <person name="Cardoso A."/>
            <person name="Almeida W."/>
            <person name="Loureiro M.M."/>
            <person name="Nogueira E."/>
            <person name="Cidade D."/>
            <person name="Oliveira D."/>
            <person name="Simao T."/>
            <person name="Macedo J."/>
            <person name="Valadao A."/>
            <person name="Dreschsel M."/>
            <person name="Freitas F."/>
            <person name="Vidal M."/>
            <person name="Guedes H."/>
            <person name="Rodrigues E."/>
            <person name="Meneses C."/>
            <person name="Brioso P."/>
            <person name="Pozzer L."/>
            <person name="Figueiredo D."/>
            <person name="Montano H."/>
            <person name="Junior J."/>
            <person name="de Souza Filho G."/>
            <person name="Martin Quintana Flores V."/>
            <person name="Ferreira B."/>
            <person name="Branco A."/>
            <person name="Gonzalez P."/>
            <person name="Guillobel H."/>
            <person name="Lemos M."/>
            <person name="Seibel L."/>
            <person name="Macedo J."/>
            <person name="Alves-Ferreira M."/>
            <person name="Sachetto-Martins G."/>
            <person name="Coelho A."/>
            <person name="Santos E."/>
            <person name="Amaral G."/>
            <person name="Neves A."/>
            <person name="Pacheco A.B."/>
            <person name="Carvalho D."/>
            <person name="Lery L."/>
            <person name="Bisch P."/>
            <person name="Rossle S.C."/>
            <person name="Urmenyi T."/>
            <person name="Rael Pereira A."/>
            <person name="Silva R."/>
            <person name="Rondinelli E."/>
            <person name="von Kruger W."/>
            <person name="Martins O."/>
            <person name="Baldani J.I."/>
            <person name="Ferreira P.C."/>
        </authorList>
    </citation>
    <scope>NUCLEOTIDE SEQUENCE [LARGE SCALE GENOMIC DNA]</scope>
    <source>
        <strain>ATCC 49037 / DSM 5601 / CCUG 37298 / CIP 103539 / LMG 7603 / PAl5</strain>
    </source>
</reference>
<reference key="2">
    <citation type="journal article" date="2010" name="Stand. Genomic Sci.">
        <title>Two genome sequences of the same bacterial strain, Gluconacetobacter diazotrophicus PAl 5, suggest a new standard in genome sequence submission.</title>
        <authorList>
            <person name="Giongo A."/>
            <person name="Tyler H.L."/>
            <person name="Zipperer U.N."/>
            <person name="Triplett E.W."/>
        </authorList>
    </citation>
    <scope>NUCLEOTIDE SEQUENCE [LARGE SCALE GENOMIC DNA]</scope>
    <source>
        <strain>ATCC 49037 / DSM 5601 / CCUG 37298 / CIP 103539 / LMG 7603 / PAl5</strain>
    </source>
</reference>
<gene>
    <name evidence="1" type="primary">dapA</name>
    <name type="ordered locus">GDI1879</name>
    <name type="ordered locus">Gdia_0103</name>
</gene>
<organism>
    <name type="scientific">Gluconacetobacter diazotrophicus (strain ATCC 49037 / DSM 5601 / CCUG 37298 / CIP 103539 / LMG 7603 / PAl5)</name>
    <dbReference type="NCBI Taxonomy" id="272568"/>
    <lineage>
        <taxon>Bacteria</taxon>
        <taxon>Pseudomonadati</taxon>
        <taxon>Pseudomonadota</taxon>
        <taxon>Alphaproteobacteria</taxon>
        <taxon>Acetobacterales</taxon>
        <taxon>Acetobacteraceae</taxon>
        <taxon>Gluconacetobacter</taxon>
    </lineage>
</organism>
<comment type="function">
    <text evidence="1">Catalyzes the condensation of (S)-aspartate-beta-semialdehyde [(S)-ASA] and pyruvate to 4-hydroxy-tetrahydrodipicolinate (HTPA).</text>
</comment>
<comment type="catalytic activity">
    <reaction evidence="1">
        <text>L-aspartate 4-semialdehyde + pyruvate = (2S,4S)-4-hydroxy-2,3,4,5-tetrahydrodipicolinate + H2O + H(+)</text>
        <dbReference type="Rhea" id="RHEA:34171"/>
        <dbReference type="ChEBI" id="CHEBI:15361"/>
        <dbReference type="ChEBI" id="CHEBI:15377"/>
        <dbReference type="ChEBI" id="CHEBI:15378"/>
        <dbReference type="ChEBI" id="CHEBI:67139"/>
        <dbReference type="ChEBI" id="CHEBI:537519"/>
        <dbReference type="EC" id="4.3.3.7"/>
    </reaction>
</comment>
<comment type="pathway">
    <text evidence="1">Amino-acid biosynthesis; L-lysine biosynthesis via DAP pathway; (S)-tetrahydrodipicolinate from L-aspartate: step 3/4.</text>
</comment>
<comment type="subunit">
    <text evidence="1">Homotetramer; dimer of dimers.</text>
</comment>
<comment type="subcellular location">
    <subcellularLocation>
        <location evidence="1">Cytoplasm</location>
    </subcellularLocation>
</comment>
<comment type="similarity">
    <text evidence="1">Belongs to the DapA family.</text>
</comment>
<comment type="caution">
    <text evidence="2">Was originally thought to be a dihydrodipicolinate synthase (DHDPS), catalyzing the condensation of (S)-aspartate-beta-semialdehyde [(S)-ASA] and pyruvate to dihydrodipicolinate (DHDP). However, it was shown in E.coli that the product of the enzymatic reaction is not dihydrodipicolinate but in fact (4S)-4-hydroxy-2,3,4,5-tetrahydro-(2S)-dipicolinic acid (HTPA), and that the consecutive dehydration reaction leading to DHDP is not spontaneous but catalyzed by DapB.</text>
</comment>
<comment type="sequence caution" evidence="2">
    <conflict type="erroneous initiation">
        <sequence resource="EMBL-CDS" id="ACI49903"/>
    </conflict>
</comment>